<comment type="catalytic activity">
    <reaction evidence="2">
        <text>a beta-lactam + H2O = a substituted beta-amino acid</text>
        <dbReference type="Rhea" id="RHEA:20401"/>
        <dbReference type="ChEBI" id="CHEBI:15377"/>
        <dbReference type="ChEBI" id="CHEBI:35627"/>
        <dbReference type="ChEBI" id="CHEBI:140347"/>
        <dbReference type="EC" id="3.5.2.6"/>
    </reaction>
</comment>
<comment type="miscellaneous">
    <text evidence="5">The class A beta-lactamase family has a specific amino-acid numbering system, sometimes called Ambler or ABL numbering and often misspelt as Amber. A multiple sequence alignment was used to derive a consensus sequence and then the consensus was numbered taking into account insertions and deletions. This allows use of identical numbers, e.g. for active site residues, despite differences in protein length. UniProt always uses natural numbering of residues, hence there appear to be differences in numbering between this entry and some papers.</text>
</comment>
<comment type="similarity">
    <text evidence="4">Belongs to the class-A beta-lactamase family.</text>
</comment>
<dbReference type="EC" id="3.5.2.6"/>
<dbReference type="EMBL" id="X04121">
    <property type="protein sequence ID" value="CAA27733.1"/>
    <property type="molecule type" value="Genomic_DNA"/>
</dbReference>
<dbReference type="EMBL" id="X16471">
    <property type="protein sequence ID" value="CAA34491.1"/>
    <property type="molecule type" value="Genomic_DNA"/>
</dbReference>
<dbReference type="EMBL" id="M15526">
    <property type="protein sequence ID" value="AAA98239.1"/>
    <property type="molecule type" value="Genomic_DNA"/>
</dbReference>
<dbReference type="EMBL" id="X52734">
    <property type="protein sequence ID" value="CAA36953.1"/>
    <property type="molecule type" value="Genomic_DNA"/>
</dbReference>
<dbReference type="PIR" id="A01002">
    <property type="entry name" value="PNSAP"/>
</dbReference>
<dbReference type="RefSeq" id="NP_878023.1">
    <property type="nucleotide sequence ID" value="NC_005054.1"/>
</dbReference>
<dbReference type="RefSeq" id="WP_000733283.1">
    <property type="nucleotide sequence ID" value="NZ_WWCF01000102.1"/>
</dbReference>
<dbReference type="RefSeq" id="YP_003329488.1">
    <property type="nucleotide sequence ID" value="NC_013550.1"/>
</dbReference>
<dbReference type="RefSeq" id="YP_006937602.1">
    <property type="nucleotide sequence ID" value="NC_013319.1"/>
</dbReference>
<dbReference type="RefSeq" id="YP_006937751.1">
    <property type="nucleotide sequence ID" value="NC_013323.1"/>
</dbReference>
<dbReference type="RefSeq" id="YP_006938263.1">
    <property type="nucleotide sequence ID" value="NC_013337.1"/>
</dbReference>
<dbReference type="RefSeq" id="YP_006938770.1">
    <property type="nucleotide sequence ID" value="NC_013352.1"/>
</dbReference>
<dbReference type="RefSeq" id="YP_008709799.1">
    <property type="nucleotide sequence ID" value="NC_022598.1"/>
</dbReference>
<dbReference type="PDB" id="1ALQ">
    <property type="method" value="X-ray"/>
    <property type="resolution" value="1.80 A"/>
    <property type="chains" value="A=24-244"/>
</dbReference>
<dbReference type="PDB" id="1BLC">
    <property type="method" value="X-ray"/>
    <property type="resolution" value="2.20 A"/>
    <property type="chains" value="A=25-281"/>
</dbReference>
<dbReference type="PDB" id="1BLH">
    <property type="method" value="X-ray"/>
    <property type="resolution" value="2.30 A"/>
    <property type="chains" value="A=25-281"/>
</dbReference>
<dbReference type="PDB" id="1BLP">
    <property type="method" value="X-ray"/>
    <property type="resolution" value="2.30 A"/>
    <property type="chains" value="A=25-281"/>
</dbReference>
<dbReference type="PDB" id="1DJA">
    <property type="method" value="X-ray"/>
    <property type="resolution" value="1.90 A"/>
    <property type="chains" value="A=25-281"/>
</dbReference>
<dbReference type="PDB" id="1DJB">
    <property type="method" value="X-ray"/>
    <property type="resolution" value="2.10 A"/>
    <property type="chains" value="A=25-281"/>
</dbReference>
<dbReference type="PDB" id="1DJC">
    <property type="method" value="X-ray"/>
    <property type="resolution" value="2.00 A"/>
    <property type="chains" value="A=25-281"/>
</dbReference>
<dbReference type="PDB" id="1GHI">
    <property type="method" value="X-ray"/>
    <property type="resolution" value="2.30 A"/>
    <property type="chains" value="A=25-281"/>
</dbReference>
<dbReference type="PDB" id="1GHM">
    <property type="method" value="X-ray"/>
    <property type="resolution" value="1.86 A"/>
    <property type="chains" value="A=25-281"/>
</dbReference>
<dbReference type="PDB" id="1GHP">
    <property type="method" value="X-ray"/>
    <property type="resolution" value="1.76 A"/>
    <property type="chains" value="A=25-281"/>
</dbReference>
<dbReference type="PDB" id="1KGE">
    <property type="method" value="X-ray"/>
    <property type="resolution" value="2.00 A"/>
    <property type="chains" value="A=25-281"/>
</dbReference>
<dbReference type="PDB" id="1KGF">
    <property type="method" value="X-ray"/>
    <property type="resolution" value="2.20 A"/>
    <property type="chains" value="A=25-281"/>
</dbReference>
<dbReference type="PDB" id="1KGG">
    <property type="method" value="X-ray"/>
    <property type="resolution" value="2.30 A"/>
    <property type="chains" value="A=24-281"/>
</dbReference>
<dbReference type="PDB" id="1OME">
    <property type="method" value="X-ray"/>
    <property type="resolution" value="2.30 A"/>
    <property type="chains" value="A/B=25-281"/>
</dbReference>
<dbReference type="PDB" id="1PIO">
    <property type="method" value="X-ray"/>
    <property type="resolution" value="2.80 A"/>
    <property type="chains" value="A/B=25-281"/>
</dbReference>
<dbReference type="PDB" id="3BLM">
    <property type="method" value="X-ray"/>
    <property type="resolution" value="2.00 A"/>
    <property type="chains" value="A=25-281"/>
</dbReference>
<dbReference type="PDB" id="6WGR">
    <property type="method" value="X-ray"/>
    <property type="resolution" value="1.88 A"/>
    <property type="chains" value="A/B/C=25-281"/>
</dbReference>
<dbReference type="PDBsum" id="1ALQ"/>
<dbReference type="PDBsum" id="1BLC"/>
<dbReference type="PDBsum" id="1BLH"/>
<dbReference type="PDBsum" id="1BLP"/>
<dbReference type="PDBsum" id="1DJA"/>
<dbReference type="PDBsum" id="1DJB"/>
<dbReference type="PDBsum" id="1DJC"/>
<dbReference type="PDBsum" id="1GHI"/>
<dbReference type="PDBsum" id="1GHM"/>
<dbReference type="PDBsum" id="1GHP"/>
<dbReference type="PDBsum" id="1KGE"/>
<dbReference type="PDBsum" id="1KGF"/>
<dbReference type="PDBsum" id="1KGG"/>
<dbReference type="PDBsum" id="1OME"/>
<dbReference type="PDBsum" id="1PIO"/>
<dbReference type="PDBsum" id="3BLM"/>
<dbReference type="PDBsum" id="6WGR"/>
<dbReference type="SMR" id="P00807"/>
<dbReference type="BindingDB" id="P00807"/>
<dbReference type="ChEMBL" id="CHEMBL4114"/>
<dbReference type="DrugBank" id="DB03814">
    <property type="generic name" value="2-(N-morpholino)ethanesulfonic acid"/>
</dbReference>
<dbReference type="DrugBank" id="DB07803">
    <property type="generic name" value="2-phenyl-1H-imidazole-4-carboxylic acid"/>
</dbReference>
<dbReference type="DrugBank" id="DB02797">
    <property type="generic name" value="3-Nitrophenylboronic Acid"/>
</dbReference>
<dbReference type="DrugBank" id="DB02627">
    <property type="generic name" value="4,4'-Biphenyldiboronic Acid"/>
</dbReference>
<dbReference type="DrugBank" id="DB02503">
    <property type="generic name" value="4-(Carboxyvin-2-Yl)Phenylboronic Acid"/>
</dbReference>
<dbReference type="DrugBank" id="DB07114">
    <property type="generic name" value="4-[(METHYLSULFONYL)AMINO]BENZOIC ACID"/>
</dbReference>
<dbReference type="DrugBank" id="DB03140">
    <property type="generic name" value="4-Carboxyphenylboronic Acid"/>
</dbReference>
<dbReference type="DrugBank" id="DB02122">
    <property type="generic name" value="4-iodo-acetamido phenylboronic acid"/>
</dbReference>
<dbReference type="DrugBank" id="DB02642">
    <property type="generic name" value="[[N-(Benzyloxycarbonyl)Amino]Methyl]Phosphate"/>
</dbReference>
<dbReference type="DrugBank" id="DB14511">
    <property type="generic name" value="Acetate"/>
</dbReference>
<dbReference type="DrugBank" id="DB03530">
    <property type="generic name" value="Acylated ceftazidime"/>
</dbReference>
<dbReference type="DrugBank" id="DB04360">
    <property type="generic name" value="Benzo[B]Thiophene-2-Boronic Acid"/>
</dbReference>
<dbReference type="DrugBank" id="DB04261">
    <property type="generic name" value="Carbamic Acid"/>
</dbReference>
<dbReference type="DrugBank" id="DB11367">
    <property type="generic name" value="Cefroxadine"/>
</dbReference>
<dbReference type="DrugBank" id="DB00766">
    <property type="generic name" value="Clavulanic acid"/>
</dbReference>
<dbReference type="DrugBank" id="DB03703">
    <property type="generic name" value="Cyclohexanol"/>
</dbReference>
<dbReference type="DrugBank" id="DB04133">
    <property type="generic name" value="Degraded Cephaloridine"/>
</dbReference>
<dbReference type="DrugBank" id="DB18716">
    <property type="generic name" value="Enmetazobactam"/>
</dbReference>
<dbReference type="DrugBank" id="DB02247">
    <property type="generic name" value="Hydrolyzed Cephalothin"/>
</dbReference>
<dbReference type="DrugBank" id="DB01896">
    <property type="generic name" value="M-Aminophenylboronic Acid"/>
</dbReference>
<dbReference type="DrugBank" id="DB02094">
    <property type="generic name" value="N-2-Thiophen-2-Yl-Acetamide Boronic Acid"/>
</dbReference>
<dbReference type="DrugBank" id="DB15353">
    <property type="generic name" value="Nacubactam"/>
</dbReference>
<dbReference type="DrugBank" id="DB12377">
    <property type="generic name" value="Relebactam"/>
</dbReference>
<dbReference type="DrugBank" id="DB02772">
    <property type="generic name" value="Sucrose"/>
</dbReference>
<dbReference type="DrugBank" id="DB09324">
    <property type="generic name" value="Sulbactam"/>
</dbReference>
<dbReference type="DrugBank" id="DB01606">
    <property type="generic name" value="Tazobactam"/>
</dbReference>
<dbReference type="DrugBank" id="DB12107">
    <property type="generic name" value="Vaborbactam"/>
</dbReference>
<dbReference type="DrugCentral" id="P00807"/>
<dbReference type="CARD" id="ARO:3008823">
    <property type="molecule name" value="PC1"/>
    <property type="mechanism identifier" value="ARO:0001004"/>
    <property type="mechanism name" value="antibiotic inactivation"/>
</dbReference>
<dbReference type="OMA" id="EWMKGNA"/>
<dbReference type="OrthoDB" id="9784149at2"/>
<dbReference type="SABIO-RK" id="P00807"/>
<dbReference type="EvolutionaryTrace" id="P00807"/>
<dbReference type="PRO" id="PR:P00807"/>
<dbReference type="GO" id="GO:0008800">
    <property type="term" value="F:beta-lactamase activity"/>
    <property type="evidence" value="ECO:0007669"/>
    <property type="project" value="UniProtKB-EC"/>
</dbReference>
<dbReference type="GO" id="GO:0030655">
    <property type="term" value="P:beta-lactam antibiotic catabolic process"/>
    <property type="evidence" value="ECO:0007669"/>
    <property type="project" value="InterPro"/>
</dbReference>
<dbReference type="GO" id="GO:0046677">
    <property type="term" value="P:response to antibiotic"/>
    <property type="evidence" value="ECO:0007669"/>
    <property type="project" value="UniProtKB-KW"/>
</dbReference>
<dbReference type="Gene3D" id="3.40.710.10">
    <property type="entry name" value="DD-peptidase/beta-lactamase superfamily"/>
    <property type="match status" value="1"/>
</dbReference>
<dbReference type="InterPro" id="IPR012338">
    <property type="entry name" value="Beta-lactam/transpept-like"/>
</dbReference>
<dbReference type="InterPro" id="IPR045155">
    <property type="entry name" value="Beta-lactam_cat"/>
</dbReference>
<dbReference type="InterPro" id="IPR000871">
    <property type="entry name" value="Beta-lactam_class-A"/>
</dbReference>
<dbReference type="InterPro" id="IPR023650">
    <property type="entry name" value="Beta-lactam_class-A_AS"/>
</dbReference>
<dbReference type="InterPro" id="IPR012640">
    <property type="entry name" value="Membr_lipoprot_lipid_attach_CS"/>
</dbReference>
<dbReference type="NCBIfam" id="NF033103">
    <property type="entry name" value="bla_class_A"/>
    <property type="match status" value="1"/>
</dbReference>
<dbReference type="NCBIfam" id="NF033139">
    <property type="entry name" value="blaZ"/>
    <property type="match status" value="1"/>
</dbReference>
<dbReference type="NCBIfam" id="NF033141">
    <property type="entry name" value="blaZ_gen"/>
    <property type="match status" value="1"/>
</dbReference>
<dbReference type="PANTHER" id="PTHR35333">
    <property type="entry name" value="BETA-LACTAMASE"/>
    <property type="match status" value="1"/>
</dbReference>
<dbReference type="PANTHER" id="PTHR35333:SF3">
    <property type="entry name" value="BETA-LACTAMASE-TYPE TRANSPEPTIDASE FOLD CONTAINING PROTEIN"/>
    <property type="match status" value="1"/>
</dbReference>
<dbReference type="Pfam" id="PF13354">
    <property type="entry name" value="Beta-lactamase2"/>
    <property type="match status" value="1"/>
</dbReference>
<dbReference type="Pfam" id="PF08139">
    <property type="entry name" value="LPAM_1"/>
    <property type="match status" value="1"/>
</dbReference>
<dbReference type="PRINTS" id="PR00118">
    <property type="entry name" value="BLACTAMASEA"/>
</dbReference>
<dbReference type="SUPFAM" id="SSF56601">
    <property type="entry name" value="beta-lactamase/transpeptidase-like"/>
    <property type="match status" value="1"/>
</dbReference>
<dbReference type="PROSITE" id="PS00146">
    <property type="entry name" value="BETA_LACTAMASE_A"/>
    <property type="match status" value="1"/>
</dbReference>
<dbReference type="PROSITE" id="PS51257">
    <property type="entry name" value="PROKAR_LIPOPROTEIN"/>
    <property type="match status" value="1"/>
</dbReference>
<sequence length="281" mass="31349">MKKLIFLIVIALVLSACNSNSSHAKELNDLEKKYNAHIGVYALDTKSGKEVKFNSDKRFAYASTSKAINSAILLEQVPYNKLNKKVHINKDDIVAYSPILEKYVGKDITLKALIEASMTYSDNTANNKIIKEIGGIKKVKQRLKELGDKVTNPVRYEIELNYYSPKSKKDTSTPAAFGKTLNKLIANGKLSKENKKFLLDLMLNNKSGDTLIKDGVPKDYKVADKSGQAITYASRNDVAFVYPKGQSEPIVLVIFTNKDNKSDKPNDKLISETAKSVMKEF</sequence>
<proteinExistence type="evidence at protein level"/>
<keyword id="KW-0002">3D-structure</keyword>
<keyword id="KW-0046">Antibiotic resistance</keyword>
<keyword id="KW-0903">Direct protein sequencing</keyword>
<keyword id="KW-0378">Hydrolase</keyword>
<keyword id="KW-0614">Plasmid</keyword>
<keyword id="KW-0732">Signal</keyword>
<keyword id="KW-0814">Transposable element</keyword>
<gene>
    <name type="primary">blaZ</name>
</gene>
<reference key="1">
    <citation type="journal article" date="1986" name="Nucleic Acids Res.">
        <title>Nucleotide sequence of the Staphylococcus aureus PC1 beta-lactamase gene.</title>
        <authorList>
            <person name="Chan P.T."/>
        </authorList>
    </citation>
    <scope>NUCLEOTIDE SEQUENCE [GENOMIC DNA]</scope>
    <source>
        <strain>PC-1</strain>
        <plasmid>pI258</plasmid>
    </source>
</reference>
<reference key="2">
    <citation type="journal article" date="1989" name="Nucleic Acids Res.">
        <title>Nucleotide sequence of the blaZ gene of the Staphylococcus aureus beta-lactamase transposon Tn4002.</title>
        <authorList>
            <person name="Gillspie M.T."/>
            <person name="Skurray R.A."/>
        </authorList>
    </citation>
    <scope>NUCLEOTIDE SEQUENCE [GENOMIC DNA]</scope>
    <source>
        <strain>SK456</strain>
        <transposon>Tn4002</transposon>
    </source>
</reference>
<reference key="3">
    <citation type="journal article" date="1990" name="Mol. Microbiol.">
        <title>Tn552, a novel transposable element from Staphylococcus aureus.</title>
        <authorList>
            <person name="Rowland S.J."/>
            <person name="Dyke K.G.H."/>
        </authorList>
    </citation>
    <scope>NUCLEOTIDE SEQUENCE [GENOMIC DNA]</scope>
    <source>
        <strain>NCTC 9789 / PS80</strain>
        <transposon>Tn552</transposon>
    </source>
</reference>
<reference key="4">
    <citation type="journal article" date="1987" name="J. Bacteriol.">
        <title>Nucleotide sequence and expression of the beta-lactamase gene from Staphylococcus aureus plasmid pI258 in Escherichia coli, Bacillus subtilis, and Staphylococcus aureus.</title>
        <authorList>
            <person name="Wang P.-Z."/>
            <person name="Novick R.P."/>
        </authorList>
    </citation>
    <scope>NUCLEOTIDE SEQUENCE [GENOMIC DNA]</scope>
    <source>
        <plasmid>pI258</plasmid>
    </source>
</reference>
<reference key="5">
    <citation type="journal article" date="1981" name="J. Biol. Chem.">
        <title>Unique features in the ribosome binding site sequence of the Gram-positive Staphylococcus aureus beta-lactamase gene.</title>
        <authorList>
            <person name="McLaughlin J.R."/>
            <person name="Murray C.L."/>
            <person name="Rabinowitz J.C."/>
        </authorList>
    </citation>
    <scope>NUCLEOTIDE SEQUENCE [GENOMIC DNA] OF 1-47</scope>
</reference>
<reference key="6">
    <citation type="journal article" date="1975" name="Biochem. J.">
        <title>The amino acid sequence of Staphylococcus aureus penicillinase.</title>
        <authorList>
            <person name="Ambler R.P."/>
        </authorList>
    </citation>
    <scope>PROTEIN SEQUENCE OF 25-281</scope>
</reference>
<reference key="7">
    <citation type="journal article" date="1991" name="Biochem. J.">
        <title>A standard numbering scheme for the class A beta-lactamases.</title>
        <authorList>
            <person name="Ambler R.P."/>
            <person name="Coulson A.F."/>
            <person name="Frere J.M."/>
            <person name="Ghuysen J.M."/>
            <person name="Joris B."/>
            <person name="Forsman M."/>
            <person name="Levesque R.C."/>
            <person name="Tiraby G."/>
            <person name="Waley S.G."/>
        </authorList>
    </citation>
    <scope>AMINO ACID NUMBERING SCHEME</scope>
</reference>
<reference key="8">
    <citation type="journal article" date="1987" name="Science">
        <title>Bacterial resistance to beta-lactam antibiotics: crystal structure of beta-lactamase from Staphylococcus aureus PC1 at 2.5-A resolution.</title>
        <authorList>
            <person name="Herzberg O."/>
            <person name="Moult J."/>
        </authorList>
    </citation>
    <scope>X-RAY CRYSTALLOGRAPHY (2.5 ANGSTROMS)</scope>
</reference>
<reference key="9">
    <citation type="journal article" date="1991" name="J. Mol. Biol.">
        <title>Refined crystal structure of beta-lactamase from Staphylococcus aureus PC1 at 2.0-A resolution.</title>
        <authorList>
            <person name="Herzberg O."/>
        </authorList>
    </citation>
    <scope>X-RAY CRYSTALLOGRAPHY (2.0 ANGSTROMS)</scope>
</reference>
<reference key="10">
    <citation type="journal article" date="1998" name="Biochemistry">
        <title>Role of the omega-loop in the activity, substrate specificity, and structure of class A beta-lactamase.</title>
        <authorList>
            <person name="Banerjee S."/>
            <person name="Pieper U."/>
            <person name="Kapadia G."/>
            <person name="Pannell L.K."/>
            <person name="Herzberg O."/>
        </authorList>
    </citation>
    <scope>X-RAY CRYSTALLOGRAPHY (2.3 ANGSTROMS)</scope>
</reference>
<reference key="11">
    <citation type="journal article" date="1999" name="Protein Eng.">
        <title>Relocation of the catalytic carboxylate group in class A beta-lactamase: the structure and function of the mutant enzyme Glu166--&gt;Gln:Asn170--&gt;Asp.</title>
        <authorList>
            <person name="Chen C.C."/>
            <person name="Herzberg O."/>
        </authorList>
    </citation>
    <scope>X-RAY CRYSTALLOGRAPHY (2.3 ANGSTROMS)</scope>
</reference>
<geneLocation type="plasmid">
    <name>pI258</name>
</geneLocation>
<protein>
    <recommendedName>
        <fullName>Beta-lactamase</fullName>
        <ecNumber>3.5.2.6</ecNumber>
    </recommendedName>
    <alternativeName>
        <fullName>Penicillinase</fullName>
    </alternativeName>
</protein>
<accession>P00807</accession>
<evidence type="ECO:0000255" key="1">
    <source>
        <dbReference type="PROSITE-ProRule" id="PRU00303"/>
    </source>
</evidence>
<evidence type="ECO:0000255" key="2">
    <source>
        <dbReference type="PROSITE-ProRule" id="PRU10101"/>
    </source>
</evidence>
<evidence type="ECO:0000269" key="3">
    <source>
    </source>
</evidence>
<evidence type="ECO:0000305" key="4"/>
<evidence type="ECO:0000305" key="5">
    <source>
    </source>
</evidence>
<evidence type="ECO:0007829" key="6">
    <source>
        <dbReference type="PDB" id="1ALQ"/>
    </source>
</evidence>
<evidence type="ECO:0007829" key="7">
    <source>
        <dbReference type="PDB" id="1GHP"/>
    </source>
</evidence>
<evidence type="ECO:0007829" key="8">
    <source>
        <dbReference type="PDB" id="1OME"/>
    </source>
</evidence>
<name>BLAC_STAAU</name>
<feature type="signal peptide" evidence="1 3">
    <location>
        <begin position="1"/>
        <end position="24"/>
    </location>
</feature>
<feature type="chain" id="PRO_0000017020" description="Beta-lactamase">
    <location>
        <begin position="25"/>
        <end position="281"/>
    </location>
</feature>
<feature type="active site" description="Acyl-ester intermediate">
    <location>
        <position position="63"/>
    </location>
</feature>
<feature type="binding site">
    <location>
        <begin position="225"/>
        <end position="227"/>
    </location>
    <ligand>
        <name>substrate</name>
    </ligand>
</feature>
<feature type="helix" evidence="6">
    <location>
        <begin position="3"/>
        <end position="14"/>
    </location>
</feature>
<feature type="helix" evidence="7">
    <location>
        <begin position="26"/>
        <end position="33"/>
    </location>
</feature>
<feature type="strand" evidence="7">
    <location>
        <begin position="37"/>
        <end position="44"/>
    </location>
</feature>
<feature type="turn" evidence="7">
    <location>
        <begin position="45"/>
        <end position="47"/>
    </location>
</feature>
<feature type="strand" evidence="7">
    <location>
        <begin position="50"/>
        <end position="54"/>
    </location>
</feature>
<feature type="helix" evidence="7">
    <location>
        <begin position="62"/>
        <end position="64"/>
    </location>
</feature>
<feature type="helix" evidence="7">
    <location>
        <begin position="65"/>
        <end position="76"/>
    </location>
</feature>
<feature type="helix" evidence="7">
    <location>
        <begin position="79"/>
        <end position="83"/>
    </location>
</feature>
<feature type="strand" evidence="7">
    <location>
        <begin position="85"/>
        <end position="88"/>
    </location>
</feature>
<feature type="helix" evidence="7">
    <location>
        <begin position="90"/>
        <end position="92"/>
    </location>
</feature>
<feature type="helix" evidence="7">
    <location>
        <begin position="100"/>
        <end position="103"/>
    </location>
</feature>
<feature type="strand" evidence="7">
    <location>
        <begin position="106"/>
        <end position="109"/>
    </location>
</feature>
<feature type="helix" evidence="7">
    <location>
        <begin position="110"/>
        <end position="120"/>
    </location>
</feature>
<feature type="helix" evidence="7">
    <location>
        <begin position="123"/>
        <end position="133"/>
    </location>
</feature>
<feature type="helix" evidence="7">
    <location>
        <begin position="136"/>
        <end position="145"/>
    </location>
</feature>
<feature type="helix" evidence="7">
    <location>
        <begin position="159"/>
        <end position="161"/>
    </location>
</feature>
<feature type="strand" evidence="8">
    <location>
        <begin position="170"/>
        <end position="172"/>
    </location>
</feature>
<feature type="helix" evidence="7">
    <location>
        <begin position="174"/>
        <end position="184"/>
    </location>
</feature>
<feature type="strand" evidence="7">
    <location>
        <begin position="187"/>
        <end position="190"/>
    </location>
</feature>
<feature type="helix" evidence="7">
    <location>
        <begin position="192"/>
        <end position="204"/>
    </location>
</feature>
<feature type="helix" evidence="7">
    <location>
        <begin position="206"/>
        <end position="208"/>
    </location>
</feature>
<feature type="turn" evidence="7">
    <location>
        <begin position="209"/>
        <end position="211"/>
    </location>
</feature>
<feature type="helix" evidence="7">
    <location>
        <begin position="212"/>
        <end position="215"/>
    </location>
</feature>
<feature type="strand" evidence="7">
    <location>
        <begin position="220"/>
        <end position="228"/>
    </location>
</feature>
<feature type="strand" evidence="8">
    <location>
        <begin position="230"/>
        <end position="232"/>
    </location>
</feature>
<feature type="strand" evidence="7">
    <location>
        <begin position="235"/>
        <end position="242"/>
    </location>
</feature>
<feature type="strand" evidence="7">
    <location>
        <begin position="250"/>
        <end position="257"/>
    </location>
</feature>
<feature type="helix" evidence="7">
    <location>
        <begin position="267"/>
        <end position="278"/>
    </location>
</feature>
<organism>
    <name type="scientific">Staphylococcus aureus</name>
    <dbReference type="NCBI Taxonomy" id="1280"/>
    <lineage>
        <taxon>Bacteria</taxon>
        <taxon>Bacillati</taxon>
        <taxon>Bacillota</taxon>
        <taxon>Bacilli</taxon>
        <taxon>Bacillales</taxon>
        <taxon>Staphylococcaceae</taxon>
        <taxon>Staphylococcus</taxon>
    </lineage>
</organism>